<protein>
    <recommendedName>
        <fullName evidence="1">Guanylate kinase</fullName>
        <ecNumber evidence="1">2.7.4.8</ecNumber>
    </recommendedName>
    <alternativeName>
        <fullName evidence="1">GMP kinase</fullName>
    </alternativeName>
</protein>
<evidence type="ECO:0000255" key="1">
    <source>
        <dbReference type="HAMAP-Rule" id="MF_00328"/>
    </source>
</evidence>
<reference key="1">
    <citation type="journal article" date="2002" name="Nat. Biotechnol.">
        <title>Genome sequence of the dissimilatory metal ion-reducing bacterium Shewanella oneidensis.</title>
        <authorList>
            <person name="Heidelberg J.F."/>
            <person name="Paulsen I.T."/>
            <person name="Nelson K.E."/>
            <person name="Gaidos E.J."/>
            <person name="Nelson W.C."/>
            <person name="Read T.D."/>
            <person name="Eisen J.A."/>
            <person name="Seshadri R."/>
            <person name="Ward N.L."/>
            <person name="Methe B.A."/>
            <person name="Clayton R.A."/>
            <person name="Meyer T."/>
            <person name="Tsapin A."/>
            <person name="Scott J."/>
            <person name="Beanan M.J."/>
            <person name="Brinkac L.M."/>
            <person name="Daugherty S.C."/>
            <person name="DeBoy R.T."/>
            <person name="Dodson R.J."/>
            <person name="Durkin A.S."/>
            <person name="Haft D.H."/>
            <person name="Kolonay J.F."/>
            <person name="Madupu R."/>
            <person name="Peterson J.D."/>
            <person name="Umayam L.A."/>
            <person name="White O."/>
            <person name="Wolf A.M."/>
            <person name="Vamathevan J.J."/>
            <person name="Weidman J.F."/>
            <person name="Impraim M."/>
            <person name="Lee K."/>
            <person name="Berry K.J."/>
            <person name="Lee C."/>
            <person name="Mueller J."/>
            <person name="Khouri H.M."/>
            <person name="Gill J."/>
            <person name="Utterback T.R."/>
            <person name="McDonald L.A."/>
            <person name="Feldblyum T.V."/>
            <person name="Smith H.O."/>
            <person name="Venter J.C."/>
            <person name="Nealson K.H."/>
            <person name="Fraser C.M."/>
        </authorList>
    </citation>
    <scope>NUCLEOTIDE SEQUENCE [LARGE SCALE GENOMIC DNA]</scope>
    <source>
        <strain>ATCC 700550 / JCM 31522 / CIP 106686 / LMG 19005 / NCIMB 14063 / MR-1</strain>
    </source>
</reference>
<gene>
    <name evidence="1" type="primary">gmk</name>
    <name type="ordered locus">SO_0361</name>
</gene>
<organism>
    <name type="scientific">Shewanella oneidensis (strain ATCC 700550 / JCM 31522 / CIP 106686 / LMG 19005 / NCIMB 14063 / MR-1)</name>
    <dbReference type="NCBI Taxonomy" id="211586"/>
    <lineage>
        <taxon>Bacteria</taxon>
        <taxon>Pseudomonadati</taxon>
        <taxon>Pseudomonadota</taxon>
        <taxon>Gammaproteobacteria</taxon>
        <taxon>Alteromonadales</taxon>
        <taxon>Shewanellaceae</taxon>
        <taxon>Shewanella</taxon>
    </lineage>
</organism>
<proteinExistence type="inferred from homology"/>
<comment type="function">
    <text evidence="1">Essential for recycling GMP and indirectly, cGMP.</text>
</comment>
<comment type="catalytic activity">
    <reaction evidence="1">
        <text>GMP + ATP = GDP + ADP</text>
        <dbReference type="Rhea" id="RHEA:20780"/>
        <dbReference type="ChEBI" id="CHEBI:30616"/>
        <dbReference type="ChEBI" id="CHEBI:58115"/>
        <dbReference type="ChEBI" id="CHEBI:58189"/>
        <dbReference type="ChEBI" id="CHEBI:456216"/>
        <dbReference type="EC" id="2.7.4.8"/>
    </reaction>
</comment>
<comment type="subcellular location">
    <subcellularLocation>
        <location evidence="1">Cytoplasm</location>
    </subcellularLocation>
</comment>
<comment type="similarity">
    <text evidence="1">Belongs to the guanylate kinase family.</text>
</comment>
<sequence>MTARGNLFIVSAPSGAGKSSLISALLKDKPADMQVSVSHTTRAPRPGEINGQHYHFVNVEEFKALIAQNAFFEWAEVFGNYYGTSRHVIEHTLTQGIDVFLDIDWQGAQQVKAVMPEAIGVFILPPSRDELERRLTGRGQDSKDVIDSRMAQAVSEMSHYKEYDFIIVNDDFDTALADLRAIIRSQRLTGASQIHAQNDMLNDLLAG</sequence>
<feature type="chain" id="PRO_0000170600" description="Guanylate kinase">
    <location>
        <begin position="1"/>
        <end position="207"/>
    </location>
</feature>
<feature type="domain" description="Guanylate kinase-like" evidence="1">
    <location>
        <begin position="5"/>
        <end position="184"/>
    </location>
</feature>
<feature type="binding site" evidence="1">
    <location>
        <begin position="12"/>
        <end position="19"/>
    </location>
    <ligand>
        <name>ATP</name>
        <dbReference type="ChEBI" id="CHEBI:30616"/>
    </ligand>
</feature>
<accession>Q8EJU6</accession>
<keyword id="KW-0067">ATP-binding</keyword>
<keyword id="KW-0963">Cytoplasm</keyword>
<keyword id="KW-0418">Kinase</keyword>
<keyword id="KW-0547">Nucleotide-binding</keyword>
<keyword id="KW-1185">Reference proteome</keyword>
<keyword id="KW-0808">Transferase</keyword>
<dbReference type="EC" id="2.7.4.8" evidence="1"/>
<dbReference type="EMBL" id="AE014299">
    <property type="protein sequence ID" value="AAN53446.1"/>
    <property type="molecule type" value="Genomic_DNA"/>
</dbReference>
<dbReference type="RefSeq" id="NP_716001.1">
    <property type="nucleotide sequence ID" value="NC_004347.2"/>
</dbReference>
<dbReference type="RefSeq" id="WP_011070724.1">
    <property type="nucleotide sequence ID" value="NC_004347.2"/>
</dbReference>
<dbReference type="SMR" id="Q8EJU6"/>
<dbReference type="STRING" id="211586.SO_0361"/>
<dbReference type="PaxDb" id="211586-SO_0361"/>
<dbReference type="KEGG" id="son:SO_0361"/>
<dbReference type="PATRIC" id="fig|211586.12.peg.352"/>
<dbReference type="eggNOG" id="COG0194">
    <property type="taxonomic scope" value="Bacteria"/>
</dbReference>
<dbReference type="HOGENOM" id="CLU_001715_1_2_6"/>
<dbReference type="OrthoDB" id="9808150at2"/>
<dbReference type="PhylomeDB" id="Q8EJU6"/>
<dbReference type="BioCyc" id="SONE211586:G1GMP-346-MONOMER"/>
<dbReference type="Proteomes" id="UP000008186">
    <property type="component" value="Chromosome"/>
</dbReference>
<dbReference type="GO" id="GO:0005829">
    <property type="term" value="C:cytosol"/>
    <property type="evidence" value="ECO:0000318"/>
    <property type="project" value="GO_Central"/>
</dbReference>
<dbReference type="GO" id="GO:0005524">
    <property type="term" value="F:ATP binding"/>
    <property type="evidence" value="ECO:0007669"/>
    <property type="project" value="UniProtKB-UniRule"/>
</dbReference>
<dbReference type="GO" id="GO:0004385">
    <property type="term" value="F:guanylate kinase activity"/>
    <property type="evidence" value="ECO:0000318"/>
    <property type="project" value="GO_Central"/>
</dbReference>
<dbReference type="CDD" id="cd00071">
    <property type="entry name" value="GMPK"/>
    <property type="match status" value="1"/>
</dbReference>
<dbReference type="FunFam" id="3.40.50.300:FF:000855">
    <property type="entry name" value="Guanylate kinase"/>
    <property type="match status" value="1"/>
</dbReference>
<dbReference type="FunFam" id="3.30.63.10:FF:000002">
    <property type="entry name" value="Guanylate kinase 1"/>
    <property type="match status" value="1"/>
</dbReference>
<dbReference type="Gene3D" id="3.30.63.10">
    <property type="entry name" value="Guanylate Kinase phosphate binding domain"/>
    <property type="match status" value="1"/>
</dbReference>
<dbReference type="Gene3D" id="3.40.50.300">
    <property type="entry name" value="P-loop containing nucleotide triphosphate hydrolases"/>
    <property type="match status" value="1"/>
</dbReference>
<dbReference type="HAMAP" id="MF_00328">
    <property type="entry name" value="Guanylate_kinase"/>
    <property type="match status" value="1"/>
</dbReference>
<dbReference type="InterPro" id="IPR008145">
    <property type="entry name" value="GK/Ca_channel_bsu"/>
</dbReference>
<dbReference type="InterPro" id="IPR008144">
    <property type="entry name" value="Guanylate_kin-like_dom"/>
</dbReference>
<dbReference type="InterPro" id="IPR017665">
    <property type="entry name" value="Guanylate_kinase"/>
</dbReference>
<dbReference type="InterPro" id="IPR020590">
    <property type="entry name" value="Guanylate_kinase_CS"/>
</dbReference>
<dbReference type="InterPro" id="IPR027417">
    <property type="entry name" value="P-loop_NTPase"/>
</dbReference>
<dbReference type="NCBIfam" id="TIGR03263">
    <property type="entry name" value="guanyl_kin"/>
    <property type="match status" value="1"/>
</dbReference>
<dbReference type="PANTHER" id="PTHR23117:SF13">
    <property type="entry name" value="GUANYLATE KINASE"/>
    <property type="match status" value="1"/>
</dbReference>
<dbReference type="PANTHER" id="PTHR23117">
    <property type="entry name" value="GUANYLATE KINASE-RELATED"/>
    <property type="match status" value="1"/>
</dbReference>
<dbReference type="Pfam" id="PF00625">
    <property type="entry name" value="Guanylate_kin"/>
    <property type="match status" value="1"/>
</dbReference>
<dbReference type="SMART" id="SM00072">
    <property type="entry name" value="GuKc"/>
    <property type="match status" value="1"/>
</dbReference>
<dbReference type="SUPFAM" id="SSF52540">
    <property type="entry name" value="P-loop containing nucleoside triphosphate hydrolases"/>
    <property type="match status" value="1"/>
</dbReference>
<dbReference type="PROSITE" id="PS00856">
    <property type="entry name" value="GUANYLATE_KINASE_1"/>
    <property type="match status" value="1"/>
</dbReference>
<dbReference type="PROSITE" id="PS50052">
    <property type="entry name" value="GUANYLATE_KINASE_2"/>
    <property type="match status" value="1"/>
</dbReference>
<name>KGUA_SHEON</name>